<reference key="1">
    <citation type="submission" date="2007-06" db="EMBL/GenBank/DDBJ databases">
        <authorList>
            <person name="Dodson R.J."/>
            <person name="Harkins D."/>
            <person name="Paulsen I.T."/>
        </authorList>
    </citation>
    <scope>NUCLEOTIDE SEQUENCE [LARGE SCALE GENOMIC DNA]</scope>
    <source>
        <strain>DSM 24068 / PA7</strain>
    </source>
</reference>
<proteinExistence type="inferred from homology"/>
<name>RS11_PSEP7</name>
<gene>
    <name evidence="1" type="primary">rpsK</name>
    <name type="ordered locus">PSPA7_0860</name>
</gene>
<feature type="chain" id="PRO_1000051844" description="Small ribosomal subunit protein uS11">
    <location>
        <begin position="1"/>
        <end position="129"/>
    </location>
</feature>
<organism>
    <name type="scientific">Pseudomonas paraeruginosa (strain DSM 24068 / PA7)</name>
    <name type="common">Pseudomonas aeruginosa (strain PA7)</name>
    <dbReference type="NCBI Taxonomy" id="381754"/>
    <lineage>
        <taxon>Bacteria</taxon>
        <taxon>Pseudomonadati</taxon>
        <taxon>Pseudomonadota</taxon>
        <taxon>Gammaproteobacteria</taxon>
        <taxon>Pseudomonadales</taxon>
        <taxon>Pseudomonadaceae</taxon>
        <taxon>Pseudomonas</taxon>
        <taxon>Pseudomonas paraeruginosa</taxon>
    </lineage>
</organism>
<sequence>MAKPAARPRKKVKKTVVDGIAHIHASFNNTIVTITDRQGNALSWATSGGSGFRGSRKSTPFAAQVAAERAGQAALEYGLKNLDVNVKGPGPGRESAVRALNACGYKIASITDVTPIPHNGCRPPKKRRV</sequence>
<keyword id="KW-0687">Ribonucleoprotein</keyword>
<keyword id="KW-0689">Ribosomal protein</keyword>
<keyword id="KW-0694">RNA-binding</keyword>
<keyword id="KW-0699">rRNA-binding</keyword>
<accession>A6UZL1</accession>
<protein>
    <recommendedName>
        <fullName evidence="1">Small ribosomal subunit protein uS11</fullName>
    </recommendedName>
    <alternativeName>
        <fullName evidence="2">30S ribosomal protein S11</fullName>
    </alternativeName>
</protein>
<dbReference type="EMBL" id="CP000744">
    <property type="protein sequence ID" value="ABR80901.1"/>
    <property type="molecule type" value="Genomic_DNA"/>
</dbReference>
<dbReference type="RefSeq" id="WP_003093689.1">
    <property type="nucleotide sequence ID" value="NC_009656.1"/>
</dbReference>
<dbReference type="SMR" id="A6UZL1"/>
<dbReference type="GeneID" id="88184059"/>
<dbReference type="KEGG" id="pap:PSPA7_0860"/>
<dbReference type="HOGENOM" id="CLU_072439_5_0_6"/>
<dbReference type="Proteomes" id="UP000001582">
    <property type="component" value="Chromosome"/>
</dbReference>
<dbReference type="GO" id="GO:1990904">
    <property type="term" value="C:ribonucleoprotein complex"/>
    <property type="evidence" value="ECO:0007669"/>
    <property type="project" value="UniProtKB-KW"/>
</dbReference>
<dbReference type="GO" id="GO:0005840">
    <property type="term" value="C:ribosome"/>
    <property type="evidence" value="ECO:0007669"/>
    <property type="project" value="UniProtKB-KW"/>
</dbReference>
<dbReference type="GO" id="GO:0019843">
    <property type="term" value="F:rRNA binding"/>
    <property type="evidence" value="ECO:0007669"/>
    <property type="project" value="UniProtKB-UniRule"/>
</dbReference>
<dbReference type="GO" id="GO:0003735">
    <property type="term" value="F:structural constituent of ribosome"/>
    <property type="evidence" value="ECO:0007669"/>
    <property type="project" value="InterPro"/>
</dbReference>
<dbReference type="GO" id="GO:0006412">
    <property type="term" value="P:translation"/>
    <property type="evidence" value="ECO:0007669"/>
    <property type="project" value="UniProtKB-UniRule"/>
</dbReference>
<dbReference type="FunFam" id="3.30.420.80:FF:000001">
    <property type="entry name" value="30S ribosomal protein S11"/>
    <property type="match status" value="1"/>
</dbReference>
<dbReference type="Gene3D" id="3.30.420.80">
    <property type="entry name" value="Ribosomal protein S11"/>
    <property type="match status" value="1"/>
</dbReference>
<dbReference type="HAMAP" id="MF_01310">
    <property type="entry name" value="Ribosomal_uS11"/>
    <property type="match status" value="1"/>
</dbReference>
<dbReference type="InterPro" id="IPR001971">
    <property type="entry name" value="Ribosomal_uS11"/>
</dbReference>
<dbReference type="InterPro" id="IPR019981">
    <property type="entry name" value="Ribosomal_uS11_bac-type"/>
</dbReference>
<dbReference type="InterPro" id="IPR018102">
    <property type="entry name" value="Ribosomal_uS11_CS"/>
</dbReference>
<dbReference type="InterPro" id="IPR036967">
    <property type="entry name" value="Ribosomal_uS11_sf"/>
</dbReference>
<dbReference type="NCBIfam" id="NF003698">
    <property type="entry name" value="PRK05309.1"/>
    <property type="match status" value="1"/>
</dbReference>
<dbReference type="NCBIfam" id="TIGR03632">
    <property type="entry name" value="uS11_bact"/>
    <property type="match status" value="1"/>
</dbReference>
<dbReference type="PANTHER" id="PTHR11759">
    <property type="entry name" value="40S RIBOSOMAL PROTEIN S14/30S RIBOSOMAL PROTEIN S11"/>
    <property type="match status" value="1"/>
</dbReference>
<dbReference type="Pfam" id="PF00411">
    <property type="entry name" value="Ribosomal_S11"/>
    <property type="match status" value="1"/>
</dbReference>
<dbReference type="PIRSF" id="PIRSF002131">
    <property type="entry name" value="Ribosomal_S11"/>
    <property type="match status" value="1"/>
</dbReference>
<dbReference type="SUPFAM" id="SSF53137">
    <property type="entry name" value="Translational machinery components"/>
    <property type="match status" value="1"/>
</dbReference>
<dbReference type="PROSITE" id="PS00054">
    <property type="entry name" value="RIBOSOMAL_S11"/>
    <property type="match status" value="1"/>
</dbReference>
<evidence type="ECO:0000255" key="1">
    <source>
        <dbReference type="HAMAP-Rule" id="MF_01310"/>
    </source>
</evidence>
<evidence type="ECO:0000305" key="2"/>
<comment type="function">
    <text evidence="1">Located on the platform of the 30S subunit, it bridges several disparate RNA helices of the 16S rRNA. Forms part of the Shine-Dalgarno cleft in the 70S ribosome.</text>
</comment>
<comment type="subunit">
    <text evidence="1">Part of the 30S ribosomal subunit. Interacts with proteins S7 and S18. Binds to IF-3.</text>
</comment>
<comment type="similarity">
    <text evidence="1">Belongs to the universal ribosomal protein uS11 family.</text>
</comment>